<protein>
    <recommendedName>
        <fullName evidence="1">NADH-quinone oxidoreductase subunit K</fullName>
        <ecNumber evidence="1">7.1.1.-</ecNumber>
    </recommendedName>
    <alternativeName>
        <fullName evidence="1">NADH dehydrogenase I subunit K</fullName>
    </alternativeName>
    <alternativeName>
        <fullName evidence="1">NDH-1 subunit K</fullName>
    </alternativeName>
</protein>
<organism>
    <name type="scientific">Cupriavidus pinatubonensis (strain JMP 134 / LMG 1197)</name>
    <name type="common">Cupriavidus necator (strain JMP 134)</name>
    <dbReference type="NCBI Taxonomy" id="264198"/>
    <lineage>
        <taxon>Bacteria</taxon>
        <taxon>Pseudomonadati</taxon>
        <taxon>Pseudomonadota</taxon>
        <taxon>Betaproteobacteria</taxon>
        <taxon>Burkholderiales</taxon>
        <taxon>Burkholderiaceae</taxon>
        <taxon>Cupriavidus</taxon>
    </lineage>
</organism>
<name>NUOK_CUPPJ</name>
<gene>
    <name evidence="1" type="primary">nuoK</name>
    <name type="ordered locus">Reut_A0971</name>
</gene>
<proteinExistence type="inferred from homology"/>
<reference key="1">
    <citation type="journal article" date="2010" name="PLoS ONE">
        <title>The complete multipartite genome sequence of Cupriavidus necator JMP134, a versatile pollutant degrader.</title>
        <authorList>
            <person name="Lykidis A."/>
            <person name="Perez-Pantoja D."/>
            <person name="Ledger T."/>
            <person name="Mavromatis K."/>
            <person name="Anderson I.J."/>
            <person name="Ivanova N.N."/>
            <person name="Hooper S.D."/>
            <person name="Lapidus A."/>
            <person name="Lucas S."/>
            <person name="Gonzalez B."/>
            <person name="Kyrpides N.C."/>
        </authorList>
    </citation>
    <scope>NUCLEOTIDE SEQUENCE [LARGE SCALE GENOMIC DNA]</scope>
    <source>
        <strain>JMP134 / LMG 1197</strain>
    </source>
</reference>
<feature type="chain" id="PRO_0000390182" description="NADH-quinone oxidoreductase subunit K">
    <location>
        <begin position="1"/>
        <end position="101"/>
    </location>
</feature>
<feature type="transmembrane region" description="Helical" evidence="1">
    <location>
        <begin position="4"/>
        <end position="24"/>
    </location>
</feature>
<feature type="transmembrane region" description="Helical" evidence="1">
    <location>
        <begin position="30"/>
        <end position="50"/>
    </location>
</feature>
<feature type="transmembrane region" description="Helical" evidence="1">
    <location>
        <begin position="61"/>
        <end position="81"/>
    </location>
</feature>
<keyword id="KW-0997">Cell inner membrane</keyword>
<keyword id="KW-1003">Cell membrane</keyword>
<keyword id="KW-0472">Membrane</keyword>
<keyword id="KW-0520">NAD</keyword>
<keyword id="KW-0874">Quinone</keyword>
<keyword id="KW-1278">Translocase</keyword>
<keyword id="KW-0812">Transmembrane</keyword>
<keyword id="KW-1133">Transmembrane helix</keyword>
<keyword id="KW-0813">Transport</keyword>
<keyword id="KW-0830">Ubiquinone</keyword>
<comment type="function">
    <text evidence="1">NDH-1 shuttles electrons from NADH, via FMN and iron-sulfur (Fe-S) centers, to quinones in the respiratory chain. The immediate electron acceptor for the enzyme in this species is believed to be ubiquinone. Couples the redox reaction to proton translocation (for every two electrons transferred, four hydrogen ions are translocated across the cytoplasmic membrane), and thus conserves the redox energy in a proton gradient.</text>
</comment>
<comment type="catalytic activity">
    <reaction evidence="1">
        <text>a quinone + NADH + 5 H(+)(in) = a quinol + NAD(+) + 4 H(+)(out)</text>
        <dbReference type="Rhea" id="RHEA:57888"/>
        <dbReference type="ChEBI" id="CHEBI:15378"/>
        <dbReference type="ChEBI" id="CHEBI:24646"/>
        <dbReference type="ChEBI" id="CHEBI:57540"/>
        <dbReference type="ChEBI" id="CHEBI:57945"/>
        <dbReference type="ChEBI" id="CHEBI:132124"/>
    </reaction>
</comment>
<comment type="subunit">
    <text evidence="1">NDH-1 is composed of 14 different subunits. Subunits NuoA, H, J, K, L, M, N constitute the membrane sector of the complex.</text>
</comment>
<comment type="subcellular location">
    <subcellularLocation>
        <location evidence="1">Cell inner membrane</location>
        <topology evidence="1">Multi-pass membrane protein</topology>
    </subcellularLocation>
</comment>
<comment type="similarity">
    <text evidence="1">Belongs to the complex I subunit 4L family.</text>
</comment>
<evidence type="ECO:0000255" key="1">
    <source>
        <dbReference type="HAMAP-Rule" id="MF_01456"/>
    </source>
</evidence>
<sequence length="101" mass="11093">MLSLAHFLVLGAILFAISIVGIFLNRKNVIVLLMAIELMLLAVNMNFVAFSHYMGDLAGQVFVFFILTVAAAESAIGLAILVVLFRNLDTINVDDMDTLKY</sequence>
<dbReference type="EC" id="7.1.1.-" evidence="1"/>
<dbReference type="EMBL" id="CP000090">
    <property type="protein sequence ID" value="AAZ60350.1"/>
    <property type="molecule type" value="Genomic_DNA"/>
</dbReference>
<dbReference type="SMR" id="Q473T3"/>
<dbReference type="STRING" id="264198.Reut_A0971"/>
<dbReference type="KEGG" id="reu:Reut_A0971"/>
<dbReference type="eggNOG" id="COG0713">
    <property type="taxonomic scope" value="Bacteria"/>
</dbReference>
<dbReference type="HOGENOM" id="CLU_144724_2_0_4"/>
<dbReference type="OrthoDB" id="9801357at2"/>
<dbReference type="GO" id="GO:0030964">
    <property type="term" value="C:NADH dehydrogenase complex"/>
    <property type="evidence" value="ECO:0007669"/>
    <property type="project" value="TreeGrafter"/>
</dbReference>
<dbReference type="GO" id="GO:0005886">
    <property type="term" value="C:plasma membrane"/>
    <property type="evidence" value="ECO:0007669"/>
    <property type="project" value="UniProtKB-SubCell"/>
</dbReference>
<dbReference type="GO" id="GO:0050136">
    <property type="term" value="F:NADH:ubiquinone reductase (non-electrogenic) activity"/>
    <property type="evidence" value="ECO:0007669"/>
    <property type="project" value="UniProtKB-UniRule"/>
</dbReference>
<dbReference type="GO" id="GO:0048038">
    <property type="term" value="F:quinone binding"/>
    <property type="evidence" value="ECO:0007669"/>
    <property type="project" value="UniProtKB-KW"/>
</dbReference>
<dbReference type="GO" id="GO:0042773">
    <property type="term" value="P:ATP synthesis coupled electron transport"/>
    <property type="evidence" value="ECO:0007669"/>
    <property type="project" value="InterPro"/>
</dbReference>
<dbReference type="FunFam" id="1.10.287.3510:FF:000001">
    <property type="entry name" value="NADH-quinone oxidoreductase subunit K"/>
    <property type="match status" value="1"/>
</dbReference>
<dbReference type="Gene3D" id="1.10.287.3510">
    <property type="match status" value="1"/>
</dbReference>
<dbReference type="HAMAP" id="MF_01456">
    <property type="entry name" value="NDH1_NuoK"/>
    <property type="match status" value="1"/>
</dbReference>
<dbReference type="InterPro" id="IPR001133">
    <property type="entry name" value="NADH_UbQ_OxRdtase_chain4L/K"/>
</dbReference>
<dbReference type="InterPro" id="IPR039428">
    <property type="entry name" value="NUOK/Mnh_C1-like"/>
</dbReference>
<dbReference type="NCBIfam" id="NF004320">
    <property type="entry name" value="PRK05715.1-2"/>
    <property type="match status" value="1"/>
</dbReference>
<dbReference type="NCBIfam" id="NF004321">
    <property type="entry name" value="PRK05715.1-3"/>
    <property type="match status" value="1"/>
</dbReference>
<dbReference type="NCBIfam" id="NF004323">
    <property type="entry name" value="PRK05715.1-5"/>
    <property type="match status" value="1"/>
</dbReference>
<dbReference type="PANTHER" id="PTHR11434:SF21">
    <property type="entry name" value="NADH DEHYDROGENASE SUBUNIT 4L-RELATED"/>
    <property type="match status" value="1"/>
</dbReference>
<dbReference type="PANTHER" id="PTHR11434">
    <property type="entry name" value="NADH-UBIQUINONE OXIDOREDUCTASE SUBUNIT ND4L"/>
    <property type="match status" value="1"/>
</dbReference>
<dbReference type="Pfam" id="PF00420">
    <property type="entry name" value="Oxidored_q2"/>
    <property type="match status" value="1"/>
</dbReference>
<accession>Q473T3</accession>